<name>PUR5_PYRFU</name>
<protein>
    <recommendedName>
        <fullName evidence="1">Phosphoribosylformylglycinamidine cyclo-ligase</fullName>
        <ecNumber evidence="1">6.3.3.1</ecNumber>
    </recommendedName>
    <alternativeName>
        <fullName evidence="1">AIR synthase</fullName>
    </alternativeName>
    <alternativeName>
        <fullName evidence="1">AIRS</fullName>
    </alternativeName>
    <alternativeName>
        <fullName evidence="1">Phosphoribosyl-aminoimidazole synthetase</fullName>
    </alternativeName>
</protein>
<reference key="1">
    <citation type="journal article" date="1999" name="Genetics">
        <title>Divergence of the hyperthermophilic archaea Pyrococcus furiosus and P. horikoshii inferred from complete genomic sequences.</title>
        <authorList>
            <person name="Maeder D.L."/>
            <person name="Weiss R.B."/>
            <person name="Dunn D.M."/>
            <person name="Cherry J.L."/>
            <person name="Gonzalez J.M."/>
            <person name="DiRuggiero J."/>
            <person name="Robb F.T."/>
        </authorList>
    </citation>
    <scope>NUCLEOTIDE SEQUENCE [LARGE SCALE GENOMIC DNA]</scope>
    <source>
        <strain>ATCC 43587 / DSM 3638 / JCM 8422 / Vc1</strain>
    </source>
</reference>
<organism>
    <name type="scientific">Pyrococcus furiosus (strain ATCC 43587 / DSM 3638 / JCM 8422 / Vc1)</name>
    <dbReference type="NCBI Taxonomy" id="186497"/>
    <lineage>
        <taxon>Archaea</taxon>
        <taxon>Methanobacteriati</taxon>
        <taxon>Methanobacteriota</taxon>
        <taxon>Thermococci</taxon>
        <taxon>Thermococcales</taxon>
        <taxon>Thermococcaceae</taxon>
        <taxon>Pyrococcus</taxon>
    </lineage>
</organism>
<proteinExistence type="inferred from homology"/>
<accession>Q8U3M6</accession>
<dbReference type="EC" id="6.3.3.1" evidence="1"/>
<dbReference type="EMBL" id="AE009950">
    <property type="protein sequence ID" value="AAL80555.1"/>
    <property type="molecule type" value="Genomic_DNA"/>
</dbReference>
<dbReference type="RefSeq" id="WP_011011546.1">
    <property type="nucleotide sequence ID" value="NZ_CP023154.1"/>
</dbReference>
<dbReference type="SMR" id="Q8U3M6"/>
<dbReference type="STRING" id="186497.PF0431"/>
<dbReference type="PaxDb" id="186497-PF0431"/>
<dbReference type="GeneID" id="41712227"/>
<dbReference type="KEGG" id="pfu:PF0431"/>
<dbReference type="PATRIC" id="fig|186497.12.peg.448"/>
<dbReference type="eggNOG" id="arCOG00639">
    <property type="taxonomic scope" value="Archaea"/>
</dbReference>
<dbReference type="HOGENOM" id="CLU_047116_0_0_2"/>
<dbReference type="OrthoDB" id="6605at2157"/>
<dbReference type="PhylomeDB" id="Q8U3M6"/>
<dbReference type="UniPathway" id="UPA00074">
    <property type="reaction ID" value="UER00129"/>
</dbReference>
<dbReference type="Proteomes" id="UP000001013">
    <property type="component" value="Chromosome"/>
</dbReference>
<dbReference type="GO" id="GO:0005829">
    <property type="term" value="C:cytosol"/>
    <property type="evidence" value="ECO:0007669"/>
    <property type="project" value="TreeGrafter"/>
</dbReference>
<dbReference type="GO" id="GO:0005524">
    <property type="term" value="F:ATP binding"/>
    <property type="evidence" value="ECO:0007669"/>
    <property type="project" value="UniProtKB-KW"/>
</dbReference>
<dbReference type="GO" id="GO:0004637">
    <property type="term" value="F:phosphoribosylamine-glycine ligase activity"/>
    <property type="evidence" value="ECO:0007669"/>
    <property type="project" value="TreeGrafter"/>
</dbReference>
<dbReference type="GO" id="GO:0004641">
    <property type="term" value="F:phosphoribosylformylglycinamidine cyclo-ligase activity"/>
    <property type="evidence" value="ECO:0007669"/>
    <property type="project" value="UniProtKB-UniRule"/>
</dbReference>
<dbReference type="GO" id="GO:0006189">
    <property type="term" value="P:'de novo' IMP biosynthetic process"/>
    <property type="evidence" value="ECO:0007669"/>
    <property type="project" value="UniProtKB-UniRule"/>
</dbReference>
<dbReference type="GO" id="GO:0046084">
    <property type="term" value="P:adenine biosynthetic process"/>
    <property type="evidence" value="ECO:0007669"/>
    <property type="project" value="TreeGrafter"/>
</dbReference>
<dbReference type="CDD" id="cd02196">
    <property type="entry name" value="PurM"/>
    <property type="match status" value="1"/>
</dbReference>
<dbReference type="FunFam" id="3.30.1330.10:FF:000020">
    <property type="entry name" value="Phosphoribosylformylglycinamidine cyclo-ligase"/>
    <property type="match status" value="1"/>
</dbReference>
<dbReference type="FunFam" id="3.90.650.10:FF:000011">
    <property type="entry name" value="Phosphoribosylformylglycinamidine cyclo-ligase"/>
    <property type="match status" value="1"/>
</dbReference>
<dbReference type="Gene3D" id="3.90.650.10">
    <property type="entry name" value="PurM-like C-terminal domain"/>
    <property type="match status" value="1"/>
</dbReference>
<dbReference type="Gene3D" id="3.30.1330.10">
    <property type="entry name" value="PurM-like, N-terminal domain"/>
    <property type="match status" value="1"/>
</dbReference>
<dbReference type="HAMAP" id="MF_00741">
    <property type="entry name" value="AIRS"/>
    <property type="match status" value="1"/>
</dbReference>
<dbReference type="InterPro" id="IPR010918">
    <property type="entry name" value="PurM-like_C_dom"/>
</dbReference>
<dbReference type="InterPro" id="IPR036676">
    <property type="entry name" value="PurM-like_C_sf"/>
</dbReference>
<dbReference type="InterPro" id="IPR016188">
    <property type="entry name" value="PurM-like_N"/>
</dbReference>
<dbReference type="InterPro" id="IPR036921">
    <property type="entry name" value="PurM-like_N_sf"/>
</dbReference>
<dbReference type="InterPro" id="IPR004733">
    <property type="entry name" value="PurM_cligase"/>
</dbReference>
<dbReference type="NCBIfam" id="TIGR00878">
    <property type="entry name" value="purM"/>
    <property type="match status" value="1"/>
</dbReference>
<dbReference type="PANTHER" id="PTHR10520:SF12">
    <property type="entry name" value="TRIFUNCTIONAL PURINE BIOSYNTHETIC PROTEIN ADENOSINE-3"/>
    <property type="match status" value="1"/>
</dbReference>
<dbReference type="PANTHER" id="PTHR10520">
    <property type="entry name" value="TRIFUNCTIONAL PURINE BIOSYNTHETIC PROTEIN ADENOSINE-3-RELATED"/>
    <property type="match status" value="1"/>
</dbReference>
<dbReference type="Pfam" id="PF00586">
    <property type="entry name" value="AIRS"/>
    <property type="match status" value="1"/>
</dbReference>
<dbReference type="Pfam" id="PF02769">
    <property type="entry name" value="AIRS_C"/>
    <property type="match status" value="1"/>
</dbReference>
<dbReference type="SUPFAM" id="SSF56042">
    <property type="entry name" value="PurM C-terminal domain-like"/>
    <property type="match status" value="1"/>
</dbReference>
<dbReference type="SUPFAM" id="SSF55326">
    <property type="entry name" value="PurM N-terminal domain-like"/>
    <property type="match status" value="1"/>
</dbReference>
<evidence type="ECO:0000255" key="1">
    <source>
        <dbReference type="HAMAP-Rule" id="MF_00741"/>
    </source>
</evidence>
<gene>
    <name evidence="1" type="primary">purM</name>
    <name type="ordered locus">PF0431</name>
</gene>
<feature type="chain" id="PRO_0000148286" description="Phosphoribosylformylglycinamidine cyclo-ligase">
    <location>
        <begin position="1"/>
        <end position="334"/>
    </location>
</feature>
<keyword id="KW-0067">ATP-binding</keyword>
<keyword id="KW-0963">Cytoplasm</keyword>
<keyword id="KW-0436">Ligase</keyword>
<keyword id="KW-0547">Nucleotide-binding</keyword>
<keyword id="KW-0658">Purine biosynthesis</keyword>
<keyword id="KW-1185">Reference proteome</keyword>
<comment type="catalytic activity">
    <reaction evidence="1">
        <text>2-formamido-N(1)-(5-O-phospho-beta-D-ribosyl)acetamidine + ATP = 5-amino-1-(5-phospho-beta-D-ribosyl)imidazole + ADP + phosphate + H(+)</text>
        <dbReference type="Rhea" id="RHEA:23032"/>
        <dbReference type="ChEBI" id="CHEBI:15378"/>
        <dbReference type="ChEBI" id="CHEBI:30616"/>
        <dbReference type="ChEBI" id="CHEBI:43474"/>
        <dbReference type="ChEBI" id="CHEBI:137981"/>
        <dbReference type="ChEBI" id="CHEBI:147287"/>
        <dbReference type="ChEBI" id="CHEBI:456216"/>
        <dbReference type="EC" id="6.3.3.1"/>
    </reaction>
</comment>
<comment type="pathway">
    <text evidence="1">Purine metabolism; IMP biosynthesis via de novo pathway; 5-amino-1-(5-phospho-D-ribosyl)imidazole from N(2)-formyl-N(1)-(5-phospho-D-ribosyl)glycinamide: step 2/2.</text>
</comment>
<comment type="subcellular location">
    <subcellularLocation>
        <location evidence="1">Cytoplasm</location>
    </subcellularLocation>
</comment>
<comment type="similarity">
    <text evidence="1">Belongs to the AIR synthase family.</text>
</comment>
<sequence>MLTYAQAGVDEEKTSKALRFIIEAARKTFEFRKGKLGEPGDIGHYSALLDFGNYYLAITTDGVGTKVLVAEAVGKFDTIGIDMIAMNVNDLICVGAEPIALVDYFAIKEPNERVFEEVAKGLYKGAKEAGIAIVGGETAVMPDLVNGYDLAGTAIGIVEKDKVITGEKIRPGDAVIGISSSGIHSNGLTLARKLLIPKYGLDYEYESRKLWEWLLEPTRIYVKPILELLKSVEVHGLAHITGGGLLNLKRITNYGFRLNMPPINGIFKLIHENGVPLEEMFRVFNMGVGFVVVVSQEDKEEALQILNRYYESFELGTVSERPGIIVENYGVKFI</sequence>